<dbReference type="EMBL" id="M55013">
    <property type="protein sequence ID" value="AAA34813.1"/>
    <property type="molecule type" value="Genomic_DNA"/>
</dbReference>
<dbReference type="GO" id="GO:0005576">
    <property type="term" value="C:extracellular region"/>
    <property type="evidence" value="ECO:0007669"/>
    <property type="project" value="InterPro"/>
</dbReference>
<dbReference type="GO" id="GO:0000772">
    <property type="term" value="F:mating pheromone activity"/>
    <property type="evidence" value="ECO:0007669"/>
    <property type="project" value="InterPro"/>
</dbReference>
<dbReference type="GO" id="GO:0007618">
    <property type="term" value="P:mating"/>
    <property type="evidence" value="ECO:0007669"/>
    <property type="project" value="InterPro"/>
</dbReference>
<dbReference type="GO" id="GO:0000750">
    <property type="term" value="P:pheromone-dependent signal transduction involved in conjugation with cellular fusion"/>
    <property type="evidence" value="ECO:0007669"/>
    <property type="project" value="InterPro"/>
</dbReference>
<dbReference type="InterPro" id="IPR016326">
    <property type="entry name" value="Mating_factor_a"/>
</dbReference>
<dbReference type="InterPro" id="IPR006742">
    <property type="entry name" value="Mating_factor_alpha_C"/>
</dbReference>
<dbReference type="InterPro" id="IPR008675">
    <property type="entry name" value="Mating_factor_alpha_N"/>
</dbReference>
<dbReference type="Pfam" id="PF04648">
    <property type="entry name" value="MF_alpha"/>
    <property type="match status" value="3"/>
</dbReference>
<dbReference type="Pfam" id="PF05436">
    <property type="entry name" value="MF_alpha_N"/>
    <property type="match status" value="1"/>
</dbReference>
<dbReference type="PIRSF" id="PIRSF001866">
    <property type="entry name" value="Mating_factor_alpha"/>
    <property type="match status" value="1"/>
</dbReference>
<keyword id="KW-0165">Cleavage on pair of basic residues</keyword>
<keyword id="KW-0588">Pheromone</keyword>
<keyword id="KW-0677">Repeat</keyword>
<keyword id="KW-0732">Signal</keyword>
<reference key="1">
    <citation type="journal article" date="1988" name="Curr. Genet.">
        <title>Evidence for preferential multiplication of the internal unit in tandem repeats of the mating factor alpha genes in Saccharomyces yeasts.</title>
        <authorList>
            <person name="Kitada K."/>
            <person name="Hishinuma F."/>
        </authorList>
    </citation>
    <scope>NUCLEOTIDE SEQUENCE [GENOMIC DNA]</scope>
    <source>
        <strain>ATCC 10596 / NBRC 0751 / NRRL Y-379</strain>
    </source>
</reference>
<name>MFA1_SACUV</name>
<comment type="function">
    <text>The active factor is excreted into the culture medium by haploid cells of the alpha mating type and acts on cells of the opposite mating type (type A). It mediates the conjugation process between the two types by inhibiting the initiation of DNA synthesis in type a cells and synchronizing them with type alpha.</text>
</comment>
<comment type="domain">
    <text>The mating factor alpha-1 precursor is identical in S.italicus, S.uvarum and S.cerevisiae, except for the number of tandem repeat units: 5, 3 and 4 respectively.</text>
</comment>
<evidence type="ECO:0000305" key="1"/>
<protein>
    <recommendedName>
        <fullName>Mating factor alpha</fullName>
    </recommendedName>
    <alternativeName>
        <fullName>Alpha mating pheromone</fullName>
    </alternativeName>
    <component>
        <recommendedName>
            <fullName>Alpha-1 mating pheromone</fullName>
        </recommendedName>
    </component>
    <component>
        <recommendedName>
            <fullName>Mating factor alpha</fullName>
        </recommendedName>
    </component>
</protein>
<accession>P25501</accession>
<proteinExistence type="predicted"/>
<feature type="signal peptide" description="Or 20" evidence="1">
    <location>
        <begin position="1"/>
        <end position="19"/>
    </location>
</feature>
<feature type="chain" id="PRO_0000021686" description="Alpha-1 mating pheromone">
    <location>
        <begin position="20"/>
        <end position="144"/>
    </location>
</feature>
<feature type="peptide" id="PRO_0000021687" description="Mating factor alpha">
    <location>
        <begin position="90"/>
        <end position="102"/>
    </location>
</feature>
<feature type="peptide" id="PRO_0000021688" description="Mating factor alpha">
    <location>
        <begin position="111"/>
        <end position="123"/>
    </location>
</feature>
<feature type="peptide" id="PRO_0000021689" description="Mating factor alpha">
    <location>
        <begin position="132"/>
        <end position="144"/>
    </location>
</feature>
<organism>
    <name type="scientific">Saccharomyces uvarum</name>
    <name type="common">Yeast</name>
    <name type="synonym">Saccharomyces bayanus var. uvarum</name>
    <dbReference type="NCBI Taxonomy" id="230603"/>
    <lineage>
        <taxon>Eukaryota</taxon>
        <taxon>Fungi</taxon>
        <taxon>Dikarya</taxon>
        <taxon>Ascomycota</taxon>
        <taxon>Saccharomycotina</taxon>
        <taxon>Saccharomycetes</taxon>
        <taxon>Saccharomycetales</taxon>
        <taxon>Saccharomycetaceae</taxon>
        <taxon>Saccharomyces</taxon>
    </lineage>
</organism>
<sequence>MRFPSIFTAVLFAASSALAAPVNTTTEDETAQIPAEAVIGYLDLEGDFDVAVLPFSNSTNNGLLFINTTIASIAAKEEGVSLDKREAEAWHWLQLKPGQPMYKREADAEAWHWLQLKPGQPMYKREADAEAWHWLQLKPGQPMY</sequence>